<organism>
    <name type="scientific">Enterobacter sp. (strain 638)</name>
    <dbReference type="NCBI Taxonomy" id="399742"/>
    <lineage>
        <taxon>Bacteria</taxon>
        <taxon>Pseudomonadati</taxon>
        <taxon>Pseudomonadota</taxon>
        <taxon>Gammaproteobacteria</taxon>
        <taxon>Enterobacterales</taxon>
        <taxon>Enterobacteriaceae</taxon>
        <taxon>Enterobacter</taxon>
    </lineage>
</organism>
<dbReference type="EMBL" id="CP000653">
    <property type="protein sequence ID" value="ABP60588.1"/>
    <property type="molecule type" value="Genomic_DNA"/>
</dbReference>
<dbReference type="RefSeq" id="WP_012017303.1">
    <property type="nucleotide sequence ID" value="NC_009436.1"/>
</dbReference>
<dbReference type="SMR" id="A4WA58"/>
<dbReference type="STRING" id="399742.Ent638_1912"/>
<dbReference type="KEGG" id="ent:Ent638_1912"/>
<dbReference type="eggNOG" id="COG2076">
    <property type="taxonomic scope" value="Bacteria"/>
</dbReference>
<dbReference type="HOGENOM" id="CLU_133067_0_4_6"/>
<dbReference type="OrthoDB" id="71834at2"/>
<dbReference type="Proteomes" id="UP000000230">
    <property type="component" value="Chromosome"/>
</dbReference>
<dbReference type="GO" id="GO:0005886">
    <property type="term" value="C:plasma membrane"/>
    <property type="evidence" value="ECO:0007669"/>
    <property type="project" value="UniProtKB-SubCell"/>
</dbReference>
<dbReference type="GO" id="GO:0015199">
    <property type="term" value="F:amino-acid betaine transmembrane transporter activity"/>
    <property type="evidence" value="ECO:0007669"/>
    <property type="project" value="TreeGrafter"/>
</dbReference>
<dbReference type="GO" id="GO:0015297">
    <property type="term" value="F:antiporter activity"/>
    <property type="evidence" value="ECO:0007669"/>
    <property type="project" value="TreeGrafter"/>
</dbReference>
<dbReference type="GO" id="GO:0015220">
    <property type="term" value="F:choline transmembrane transporter activity"/>
    <property type="evidence" value="ECO:0007669"/>
    <property type="project" value="TreeGrafter"/>
</dbReference>
<dbReference type="GO" id="GO:0015606">
    <property type="term" value="F:spermidine transmembrane transporter activity"/>
    <property type="evidence" value="ECO:0007669"/>
    <property type="project" value="UniProtKB-UniRule"/>
</dbReference>
<dbReference type="GO" id="GO:0031460">
    <property type="term" value="P:glycine betaine transport"/>
    <property type="evidence" value="ECO:0007669"/>
    <property type="project" value="TreeGrafter"/>
</dbReference>
<dbReference type="FunFam" id="1.10.3730.20:FF:000001">
    <property type="entry name" value="Quaternary ammonium compound resistance transporter SugE"/>
    <property type="match status" value="1"/>
</dbReference>
<dbReference type="Gene3D" id="1.10.3730.20">
    <property type="match status" value="1"/>
</dbReference>
<dbReference type="HAMAP" id="MF_01597">
    <property type="entry name" value="MdtI"/>
    <property type="match status" value="1"/>
</dbReference>
<dbReference type="InterPro" id="IPR000390">
    <property type="entry name" value="Small_drug/metabolite_transptr"/>
</dbReference>
<dbReference type="InterPro" id="IPR045324">
    <property type="entry name" value="Small_multidrug_res"/>
</dbReference>
<dbReference type="InterPro" id="IPR023737">
    <property type="entry name" value="Spermidine_export_MdtI"/>
</dbReference>
<dbReference type="NCBIfam" id="NF007934">
    <property type="entry name" value="PRK10650.1"/>
    <property type="match status" value="1"/>
</dbReference>
<dbReference type="PANTHER" id="PTHR30561">
    <property type="entry name" value="SMR FAMILY PROTON-DEPENDENT DRUG EFFLUX TRANSPORTER SUGE"/>
    <property type="match status" value="1"/>
</dbReference>
<dbReference type="PANTHER" id="PTHR30561:SF6">
    <property type="entry name" value="SPERMIDINE EXPORT PROTEIN MDTI"/>
    <property type="match status" value="1"/>
</dbReference>
<dbReference type="Pfam" id="PF00893">
    <property type="entry name" value="Multi_Drug_Res"/>
    <property type="match status" value="1"/>
</dbReference>
<dbReference type="SUPFAM" id="SSF103481">
    <property type="entry name" value="Multidrug resistance efflux transporter EmrE"/>
    <property type="match status" value="1"/>
</dbReference>
<comment type="function">
    <text evidence="1">Catalyzes the excretion of spermidine.</text>
</comment>
<comment type="subunit">
    <text evidence="1">Forms a complex with MdtJ.</text>
</comment>
<comment type="subcellular location">
    <subcellularLocation>
        <location evidence="1">Cell inner membrane</location>
        <topology evidence="1">Multi-pass membrane protein</topology>
    </subcellularLocation>
</comment>
<comment type="similarity">
    <text evidence="1">Belongs to the drug/metabolite transporter (DMT) superfamily. Small multidrug resistance (SMR) (TC 2.A.7.1) family. MdtI subfamily.</text>
</comment>
<feature type="chain" id="PRO_0000331136" description="Spermidine export protein MdtI">
    <location>
        <begin position="1"/>
        <end position="109"/>
    </location>
</feature>
<feature type="transmembrane region" description="Helical" evidence="1">
    <location>
        <begin position="6"/>
        <end position="26"/>
    </location>
</feature>
<feature type="transmembrane region" description="Helical" evidence="1">
    <location>
        <begin position="36"/>
        <end position="56"/>
    </location>
</feature>
<feature type="transmembrane region" description="Helical" evidence="1">
    <location>
        <begin position="64"/>
        <end position="84"/>
    </location>
</feature>
<feature type="transmembrane region" description="Helical" evidence="1">
    <location>
        <begin position="88"/>
        <end position="108"/>
    </location>
</feature>
<evidence type="ECO:0000255" key="1">
    <source>
        <dbReference type="HAMAP-Rule" id="MF_01597"/>
    </source>
</evidence>
<gene>
    <name evidence="1" type="primary">mdtI</name>
    <name type="ordered locus">Ent638_1912</name>
</gene>
<keyword id="KW-0997">Cell inner membrane</keyword>
<keyword id="KW-1003">Cell membrane</keyword>
<keyword id="KW-0472">Membrane</keyword>
<keyword id="KW-0812">Transmembrane</keyword>
<keyword id="KW-1133">Transmembrane helix</keyword>
<keyword id="KW-0813">Transport</keyword>
<protein>
    <recommendedName>
        <fullName evidence="1">Spermidine export protein MdtI</fullName>
    </recommendedName>
</protein>
<proteinExistence type="inferred from homology"/>
<reference key="1">
    <citation type="journal article" date="2010" name="PLoS Genet.">
        <title>Genome sequence of the plant growth promoting endophytic bacterium Enterobacter sp. 638.</title>
        <authorList>
            <person name="Taghavi S."/>
            <person name="van der Lelie D."/>
            <person name="Hoffman A."/>
            <person name="Zhang Y.B."/>
            <person name="Walla M.D."/>
            <person name="Vangronsveld J."/>
            <person name="Newman L."/>
            <person name="Monchy S."/>
        </authorList>
    </citation>
    <scope>NUCLEOTIDE SEQUENCE [LARGE SCALE GENOMIC DNA]</scope>
    <source>
        <strain>638</strain>
    </source>
</reference>
<sequence>MQQFEWIHAAWLAFAIVLEIIANVFLKFSDGFRRKWFGLLSIAAVLGAFSALSQAVKGIDLSVAYALWGGFGIAATLAAGWVLFGQRLNRKGWIGLVLLLAGMVMIKLA</sequence>
<name>MDTI_ENT38</name>
<accession>A4WA58</accession>